<reference evidence="8" key="1">
    <citation type="journal article" date="2005" name="Science">
        <title>The genome of the basidiomycetous yeast and human pathogen Cryptococcus neoformans.</title>
        <authorList>
            <person name="Loftus B.J."/>
            <person name="Fung E."/>
            <person name="Roncaglia P."/>
            <person name="Rowley D."/>
            <person name="Amedeo P."/>
            <person name="Bruno D."/>
            <person name="Vamathevan J."/>
            <person name="Miranda M."/>
            <person name="Anderson I.J."/>
            <person name="Fraser J.A."/>
            <person name="Allen J.E."/>
            <person name="Bosdet I.E."/>
            <person name="Brent M.R."/>
            <person name="Chiu R."/>
            <person name="Doering T.L."/>
            <person name="Donlin M.J."/>
            <person name="D'Souza C.A."/>
            <person name="Fox D.S."/>
            <person name="Grinberg V."/>
            <person name="Fu J."/>
            <person name="Fukushima M."/>
            <person name="Haas B.J."/>
            <person name="Huang J.C."/>
            <person name="Janbon G."/>
            <person name="Jones S.J.M."/>
            <person name="Koo H.L."/>
            <person name="Krzywinski M.I."/>
            <person name="Kwon-Chung K.J."/>
            <person name="Lengeler K.B."/>
            <person name="Maiti R."/>
            <person name="Marra M.A."/>
            <person name="Marra R.E."/>
            <person name="Mathewson C.A."/>
            <person name="Mitchell T.G."/>
            <person name="Pertea M."/>
            <person name="Riggs F.R."/>
            <person name="Salzberg S.L."/>
            <person name="Schein J.E."/>
            <person name="Shvartsbeyn A."/>
            <person name="Shin H."/>
            <person name="Shumway M."/>
            <person name="Specht C.A."/>
            <person name="Suh B.B."/>
            <person name="Tenney A."/>
            <person name="Utterback T.R."/>
            <person name="Wickes B.L."/>
            <person name="Wortman J.R."/>
            <person name="Wye N.H."/>
            <person name="Kronstad J.W."/>
            <person name="Lodge J.K."/>
            <person name="Heitman J."/>
            <person name="Davis R.W."/>
            <person name="Fraser C.M."/>
            <person name="Hyman R.W."/>
        </authorList>
    </citation>
    <scope>NUCLEOTIDE SEQUENCE [LARGE SCALE GENOMIC DNA]</scope>
    <source>
        <strain evidence="8">JEC21 / ATCC MYA-565</strain>
    </source>
</reference>
<reference evidence="6" key="2">
    <citation type="journal article" date="2006" name="Mol. Microbiol.">
        <title>The Hsp70 member, Ssa1, acts as a DNA-binding transcriptional co-activator of laccase in Cryptococcus neoformans.</title>
        <authorList>
            <person name="Zhang S."/>
            <person name="Hacham M."/>
            <person name="Panepinto J."/>
            <person name="Hu G."/>
            <person name="Shin S."/>
            <person name="Zhu X."/>
            <person name="Williamson P.R."/>
        </authorList>
    </citation>
    <scope>FUNCTION</scope>
    <scope>INTERACTION WITH HSF1</scope>
    <scope>SUBCELLULAR LOCATION</scope>
    <scope>DISRUPTION PHENOTYPE</scope>
</reference>
<reference evidence="6" key="3">
    <citation type="journal article" date="2015" name="J. Immunol.">
        <title>Cryptococcal heat shock protein 70 homolog Ssa1 contributes to pulmonary expansion of Cryptococcus neoformans during the afferent phase of the immune response by promoting macrophage M2 polarization.</title>
        <authorList>
            <person name="Eastman A.J."/>
            <person name="He X."/>
            <person name="Qiu Y."/>
            <person name="Davis M.J."/>
            <person name="Vedula P."/>
            <person name="Lyons D.M."/>
            <person name="Park Y.D."/>
            <person name="Hardison S.E."/>
            <person name="Malachowski A.N."/>
            <person name="Osterholzer J.J."/>
            <person name="Wormley F.L. Jr."/>
            <person name="Williamson P.R."/>
            <person name="Olszewski M.A."/>
        </authorList>
    </citation>
    <scope>DISRUPTION PHENOTYPE</scope>
</reference>
<evidence type="ECO:0000255" key="1">
    <source>
        <dbReference type="RuleBase" id="RU003322"/>
    </source>
</evidence>
<evidence type="ECO:0000256" key="2">
    <source>
        <dbReference type="SAM" id="MobiDB-lite"/>
    </source>
</evidence>
<evidence type="ECO:0000269" key="3">
    <source>
    </source>
</evidence>
<evidence type="ECO:0000269" key="4">
    <source>
    </source>
</evidence>
<evidence type="ECO:0000303" key="5">
    <source>
    </source>
</evidence>
<evidence type="ECO:0000305" key="6"/>
<evidence type="ECO:0000312" key="7">
    <source>
        <dbReference type="EMBL" id="AAW42202.1"/>
    </source>
</evidence>
<evidence type="ECO:0000312" key="8">
    <source>
        <dbReference type="Proteomes" id="UP000002149"/>
    </source>
</evidence>
<protein>
    <recommendedName>
        <fullName evidence="5">Transcriptional coregulator SSA1</fullName>
    </recommendedName>
</protein>
<dbReference type="EMBL" id="AE017343">
    <property type="protein sequence ID" value="AAW42202.1"/>
    <property type="molecule type" value="Genomic_DNA"/>
</dbReference>
<dbReference type="RefSeq" id="XP_569509.1">
    <property type="nucleotide sequence ID" value="XM_569509.1"/>
</dbReference>
<dbReference type="SMR" id="Q5KKP4"/>
<dbReference type="FunCoup" id="Q5KKP4">
    <property type="interactions" value="416"/>
</dbReference>
<dbReference type="STRING" id="214684.Q5KKP4"/>
<dbReference type="PaxDb" id="214684-Q5KKP4"/>
<dbReference type="EnsemblFungi" id="AAW42202">
    <property type="protein sequence ID" value="AAW42202"/>
    <property type="gene ID" value="CNC02320"/>
</dbReference>
<dbReference type="GeneID" id="3256505"/>
<dbReference type="KEGG" id="cne:CNC02320"/>
<dbReference type="VEuPathDB" id="FungiDB:CNC02320"/>
<dbReference type="eggNOG" id="KOG0101">
    <property type="taxonomic scope" value="Eukaryota"/>
</dbReference>
<dbReference type="HOGENOM" id="CLU_005965_3_2_1"/>
<dbReference type="InParanoid" id="Q5KKP4"/>
<dbReference type="OMA" id="AYTKNQD"/>
<dbReference type="OrthoDB" id="2401965at2759"/>
<dbReference type="Proteomes" id="UP000002149">
    <property type="component" value="Chromosome 3"/>
</dbReference>
<dbReference type="GO" id="GO:0005737">
    <property type="term" value="C:cytoplasm"/>
    <property type="evidence" value="ECO:0000318"/>
    <property type="project" value="GO_Central"/>
</dbReference>
<dbReference type="GO" id="GO:0005829">
    <property type="term" value="C:cytosol"/>
    <property type="evidence" value="ECO:0000318"/>
    <property type="project" value="GO_Central"/>
</dbReference>
<dbReference type="GO" id="GO:0005634">
    <property type="term" value="C:nucleus"/>
    <property type="evidence" value="ECO:0000314"/>
    <property type="project" value="UniProtKB"/>
</dbReference>
<dbReference type="GO" id="GO:0005886">
    <property type="term" value="C:plasma membrane"/>
    <property type="evidence" value="ECO:0000318"/>
    <property type="project" value="GO_Central"/>
</dbReference>
<dbReference type="GO" id="GO:0005524">
    <property type="term" value="F:ATP binding"/>
    <property type="evidence" value="ECO:0007669"/>
    <property type="project" value="UniProtKB-KW"/>
</dbReference>
<dbReference type="GO" id="GO:0016887">
    <property type="term" value="F:ATP hydrolysis activity"/>
    <property type="evidence" value="ECO:0000318"/>
    <property type="project" value="GO_Central"/>
</dbReference>
<dbReference type="GO" id="GO:0140662">
    <property type="term" value="F:ATP-dependent protein folding chaperone"/>
    <property type="evidence" value="ECO:0007669"/>
    <property type="project" value="InterPro"/>
</dbReference>
<dbReference type="GO" id="GO:0031072">
    <property type="term" value="F:heat shock protein binding"/>
    <property type="evidence" value="ECO:0000318"/>
    <property type="project" value="GO_Central"/>
</dbReference>
<dbReference type="GO" id="GO:0044183">
    <property type="term" value="F:protein folding chaperone"/>
    <property type="evidence" value="ECO:0000318"/>
    <property type="project" value="GO_Central"/>
</dbReference>
<dbReference type="GO" id="GO:0003712">
    <property type="term" value="F:transcription coregulator activity"/>
    <property type="evidence" value="ECO:0000314"/>
    <property type="project" value="UniProtKB"/>
</dbReference>
<dbReference type="GO" id="GO:0051085">
    <property type="term" value="P:chaperone cofactor-dependent protein refolding"/>
    <property type="evidence" value="ECO:0000318"/>
    <property type="project" value="GO_Central"/>
</dbReference>
<dbReference type="GO" id="GO:0042026">
    <property type="term" value="P:protein refolding"/>
    <property type="evidence" value="ECO:0000318"/>
    <property type="project" value="GO_Central"/>
</dbReference>
<dbReference type="CDD" id="cd10233">
    <property type="entry name" value="ASKHA_NBD_HSP70_HSPA1"/>
    <property type="match status" value="1"/>
</dbReference>
<dbReference type="FunFam" id="2.60.34.10:FF:000002">
    <property type="entry name" value="Heat shock 70 kDa"/>
    <property type="match status" value="1"/>
</dbReference>
<dbReference type="FunFam" id="3.90.640.10:FF:000002">
    <property type="entry name" value="Heat shock 70 kDa"/>
    <property type="match status" value="1"/>
</dbReference>
<dbReference type="FunFam" id="3.30.420.40:FF:000172">
    <property type="entry name" value="Heat shock 70 kDa protein"/>
    <property type="match status" value="1"/>
</dbReference>
<dbReference type="FunFam" id="3.30.30.30:FF:000001">
    <property type="entry name" value="heat shock 70 kDa protein-like"/>
    <property type="match status" value="1"/>
</dbReference>
<dbReference type="FunFam" id="1.20.1270.10:FF:000016">
    <property type="entry name" value="Heat shock protein 70"/>
    <property type="match status" value="1"/>
</dbReference>
<dbReference type="FunFam" id="3.30.420.40:FF:000026">
    <property type="entry name" value="Heat shock protein 70"/>
    <property type="match status" value="1"/>
</dbReference>
<dbReference type="Gene3D" id="1.20.1270.10">
    <property type="match status" value="1"/>
</dbReference>
<dbReference type="Gene3D" id="3.30.30.30">
    <property type="match status" value="1"/>
</dbReference>
<dbReference type="Gene3D" id="3.30.420.40">
    <property type="match status" value="2"/>
</dbReference>
<dbReference type="Gene3D" id="3.90.640.10">
    <property type="entry name" value="Actin, Chain A, domain 4"/>
    <property type="match status" value="1"/>
</dbReference>
<dbReference type="Gene3D" id="2.60.34.10">
    <property type="entry name" value="Substrate Binding Domain Of DNAk, Chain A, domain 1"/>
    <property type="match status" value="1"/>
</dbReference>
<dbReference type="InterPro" id="IPR043129">
    <property type="entry name" value="ATPase_NBD"/>
</dbReference>
<dbReference type="InterPro" id="IPR018181">
    <property type="entry name" value="Heat_shock_70_CS"/>
</dbReference>
<dbReference type="InterPro" id="IPR029048">
    <property type="entry name" value="HSP70_C_sf"/>
</dbReference>
<dbReference type="InterPro" id="IPR029047">
    <property type="entry name" value="HSP70_peptide-bd_sf"/>
</dbReference>
<dbReference type="InterPro" id="IPR013126">
    <property type="entry name" value="Hsp_70_fam"/>
</dbReference>
<dbReference type="NCBIfam" id="NF001413">
    <property type="entry name" value="PRK00290.1"/>
    <property type="match status" value="1"/>
</dbReference>
<dbReference type="PANTHER" id="PTHR19375">
    <property type="entry name" value="HEAT SHOCK PROTEIN 70KDA"/>
    <property type="match status" value="1"/>
</dbReference>
<dbReference type="Pfam" id="PF00012">
    <property type="entry name" value="HSP70"/>
    <property type="match status" value="1"/>
</dbReference>
<dbReference type="PRINTS" id="PR00301">
    <property type="entry name" value="HEATSHOCK70"/>
</dbReference>
<dbReference type="SUPFAM" id="SSF53067">
    <property type="entry name" value="Actin-like ATPase domain"/>
    <property type="match status" value="2"/>
</dbReference>
<dbReference type="SUPFAM" id="SSF100934">
    <property type="entry name" value="Heat shock protein 70kD (HSP70), C-terminal subdomain"/>
    <property type="match status" value="1"/>
</dbReference>
<dbReference type="SUPFAM" id="SSF100920">
    <property type="entry name" value="Heat shock protein 70kD (HSP70), peptide-binding domain"/>
    <property type="match status" value="1"/>
</dbReference>
<dbReference type="PROSITE" id="PS00297">
    <property type="entry name" value="HSP70_1"/>
    <property type="match status" value="1"/>
</dbReference>
<dbReference type="PROSITE" id="PS00329">
    <property type="entry name" value="HSP70_2"/>
    <property type="match status" value="1"/>
</dbReference>
<dbReference type="PROSITE" id="PS01036">
    <property type="entry name" value="HSP70_3"/>
    <property type="match status" value="1"/>
</dbReference>
<keyword id="KW-0067">ATP-binding</keyword>
<keyword id="KW-0547">Nucleotide-binding</keyword>
<keyword id="KW-0539">Nucleus</keyword>
<keyword id="KW-1185">Reference proteome</keyword>
<keyword id="KW-0346">Stress response</keyword>
<keyword id="KW-0804">Transcription</keyword>
<keyword id="KW-0805">Transcription regulation</keyword>
<sequence>MVKAVGIDLGTTYSCVAVWQNDRVEIIANDQGNRTTPSYVAFNDSERLIGDAAKNQVAMNPYNTVFDAKRLIGRKFEDAEVQADMKHWPFKVIDRAGKPAIQVEYRGEEKVFTPEEISSMVLIKMKETAEAYLGGTVSKAVVTVPAYFNDSQRQATKDAGAIAGLDVLRIINEPTAAAIAYGLDKKSEGEKNVLIFDLGGGTFDVSLLTIEEGIFEVKATAGDTHLGGEDFDNRLVNHFVQEFKRKNKKDLSSNARALRRLRTACERAKRTLSSAAQTSIEIDSLFDGIDFYTSITRARFEELCQDLFRSTMDPVEKVLRDSKIDKSSVNEIVLVGGSTRIPKIQKLVSDMFSGREPNRSINPDEAVAYGAAVQAAILTGDTSEATQDLLLLDVAPLSMGIETAGGIMTPLIKRNTTVPTKKSEVFSTYSDNQPGVLIQVFEGERAKTKDCNLLGKFDLSGIPPAPRGVPQIEVSFDVDANGILNVNAADKSTGKSSKITITNDKGRLSKEEIERMLAEAEKFKAEDEAAAATVQAKNGLESYSYSLKTTLSDNQDKFDAADHETLSKKVDEVISSLDTMQSASKEEFESLQKELEAVANPIMTKFYGAQGGAPGGAPGGFPGAGGAPAQEEGPSVEEVD</sequence>
<name>HSP71_CRYNJ</name>
<gene>
    <name evidence="5" type="primary">SSA1</name>
    <name evidence="7" type="ordered locus">CNC02320</name>
</gene>
<feature type="chain" id="PRO_0000452019" description="Transcriptional coregulator SSA1">
    <location>
        <begin position="1"/>
        <end position="640"/>
    </location>
</feature>
<feature type="region of interest" description="Disordered" evidence="2">
    <location>
        <begin position="606"/>
        <end position="640"/>
    </location>
</feature>
<feature type="compositionally biased region" description="Gly residues" evidence="2">
    <location>
        <begin position="609"/>
        <end position="626"/>
    </location>
</feature>
<proteinExistence type="evidence at protein level"/>
<comment type="function">
    <text evidence="3">Transcriptional coregulator that functions together with transcription factor HSF1 (PubMed:17040492). Positively regulates the expression of laccase LAC1 during glucose starvation (PubMed:17040492).</text>
</comment>
<comment type="subunit">
    <text evidence="3">Interacts with transcription factor HSF1 on chromatin.</text>
</comment>
<comment type="subcellular location">
    <subcellularLocation>
        <location evidence="3">Nucleus</location>
    </subcellularLocation>
</comment>
<comment type="disruption phenotype">
    <text evidence="3 4">Abolishes LAC1 expression and activity during glucose starvation (PubMed:17040492). Abolishes laccase activity during calcium stress and iron stress (PubMed:17040492). Severely decreases laccase activity during copper stress (PubMed:17040492). Melanin absent from cell (PubMed:25972480). Decreases virulence in a mouse intravenous inoculation model of infection (PubMed:17040492).</text>
</comment>
<comment type="similarity">
    <text evidence="1">Belongs to the heat shock protein 70 family.</text>
</comment>
<accession>Q5KKP4</accession>
<accession>Q55VJ4</accession>
<organism evidence="8">
    <name type="scientific">Cryptococcus neoformans var. neoformans serotype D (strain JEC21 / ATCC MYA-565)</name>
    <name type="common">Filobasidiella neoformans</name>
    <dbReference type="NCBI Taxonomy" id="214684"/>
    <lineage>
        <taxon>Eukaryota</taxon>
        <taxon>Fungi</taxon>
        <taxon>Dikarya</taxon>
        <taxon>Basidiomycota</taxon>
        <taxon>Agaricomycotina</taxon>
        <taxon>Tremellomycetes</taxon>
        <taxon>Tremellales</taxon>
        <taxon>Cryptococcaceae</taxon>
        <taxon>Cryptococcus</taxon>
        <taxon>Cryptococcus neoformans species complex</taxon>
    </lineage>
</organism>